<feature type="chain" id="PRO_0000174671" description="SH3 and multiple ankyrin repeat domains protein 1">
    <location>
        <begin position="1"/>
        <end position="2161"/>
    </location>
</feature>
<feature type="repeat" description="ANK 1">
    <location>
        <begin position="212"/>
        <end position="245"/>
    </location>
</feature>
<feature type="repeat" description="ANK 2">
    <location>
        <begin position="246"/>
        <end position="278"/>
    </location>
</feature>
<feature type="repeat" description="ANK 3">
    <location>
        <begin position="279"/>
        <end position="312"/>
    </location>
</feature>
<feature type="repeat" description="ANK 4">
    <location>
        <begin position="313"/>
        <end position="345"/>
    </location>
</feature>
<feature type="repeat" description="ANK 5">
    <location>
        <begin position="346"/>
        <end position="378"/>
    </location>
</feature>
<feature type="repeat" description="ANK 6">
    <location>
        <begin position="379"/>
        <end position="395"/>
    </location>
</feature>
<feature type="domain" description="SH3" evidence="6">
    <location>
        <begin position="554"/>
        <end position="613"/>
    </location>
</feature>
<feature type="domain" description="PDZ" evidence="4">
    <location>
        <begin position="663"/>
        <end position="757"/>
    </location>
</feature>
<feature type="domain" description="SAM" evidence="5">
    <location>
        <begin position="2098"/>
        <end position="2161"/>
    </location>
</feature>
<feature type="region of interest" description="Disordered" evidence="7">
    <location>
        <begin position="1"/>
        <end position="53"/>
    </location>
</feature>
<feature type="region of interest" description="Disordered" evidence="7">
    <location>
        <begin position="412"/>
        <end position="433"/>
    </location>
</feature>
<feature type="region of interest" description="Disordered" evidence="7">
    <location>
        <begin position="455"/>
        <end position="546"/>
    </location>
</feature>
<feature type="region of interest" description="Disordered" evidence="7">
    <location>
        <begin position="832"/>
        <end position="886"/>
    </location>
</feature>
<feature type="region of interest" description="Disordered" evidence="7">
    <location>
        <begin position="909"/>
        <end position="1229"/>
    </location>
</feature>
<feature type="region of interest" description="Disordered" evidence="7">
    <location>
        <begin position="1241"/>
        <end position="1289"/>
    </location>
</feature>
<feature type="region of interest" description="Disordered" evidence="7">
    <location>
        <begin position="1353"/>
        <end position="1720"/>
    </location>
</feature>
<feature type="region of interest" description="Disordered" evidence="7">
    <location>
        <begin position="1734"/>
        <end position="1785"/>
    </location>
</feature>
<feature type="region of interest" description="Disordered" evidence="7">
    <location>
        <begin position="1827"/>
        <end position="1860"/>
    </location>
</feature>
<feature type="region of interest" description="Disordered" evidence="7">
    <location>
        <begin position="1892"/>
        <end position="1983"/>
    </location>
</feature>
<feature type="region of interest" description="Disordered" evidence="7">
    <location>
        <begin position="1996"/>
        <end position="2023"/>
    </location>
</feature>
<feature type="compositionally biased region" description="Low complexity" evidence="7">
    <location>
        <begin position="17"/>
        <end position="32"/>
    </location>
</feature>
<feature type="compositionally biased region" description="Gly residues" evidence="7">
    <location>
        <begin position="33"/>
        <end position="47"/>
    </location>
</feature>
<feature type="compositionally biased region" description="Low complexity" evidence="7">
    <location>
        <begin position="455"/>
        <end position="479"/>
    </location>
</feature>
<feature type="compositionally biased region" description="Gly residues" evidence="7">
    <location>
        <begin position="527"/>
        <end position="542"/>
    </location>
</feature>
<feature type="compositionally biased region" description="Pro residues" evidence="7">
    <location>
        <begin position="920"/>
        <end position="939"/>
    </location>
</feature>
<feature type="compositionally biased region" description="Basic residues" evidence="7">
    <location>
        <begin position="996"/>
        <end position="1020"/>
    </location>
</feature>
<feature type="compositionally biased region" description="Pro residues" evidence="7">
    <location>
        <begin position="1127"/>
        <end position="1144"/>
    </location>
</feature>
<feature type="compositionally biased region" description="Low complexity" evidence="7">
    <location>
        <begin position="1164"/>
        <end position="1181"/>
    </location>
</feature>
<feature type="compositionally biased region" description="Pro residues" evidence="7">
    <location>
        <begin position="1199"/>
        <end position="1220"/>
    </location>
</feature>
<feature type="compositionally biased region" description="Basic and acidic residues" evidence="7">
    <location>
        <begin position="1241"/>
        <end position="1252"/>
    </location>
</feature>
<feature type="compositionally biased region" description="Basic and acidic residues" evidence="7">
    <location>
        <begin position="1359"/>
        <end position="1368"/>
    </location>
</feature>
<feature type="compositionally biased region" description="Pro residues" evidence="7">
    <location>
        <begin position="1374"/>
        <end position="1391"/>
    </location>
</feature>
<feature type="compositionally biased region" description="Pro residues" evidence="7">
    <location>
        <begin position="1517"/>
        <end position="1532"/>
    </location>
</feature>
<feature type="compositionally biased region" description="Pro residues" evidence="7">
    <location>
        <begin position="1583"/>
        <end position="1609"/>
    </location>
</feature>
<feature type="compositionally biased region" description="Polar residues" evidence="7">
    <location>
        <begin position="1618"/>
        <end position="1636"/>
    </location>
</feature>
<feature type="compositionally biased region" description="Pro residues" evidence="7">
    <location>
        <begin position="1644"/>
        <end position="1670"/>
    </location>
</feature>
<feature type="compositionally biased region" description="Basic and acidic residues" evidence="7">
    <location>
        <begin position="1678"/>
        <end position="1688"/>
    </location>
</feature>
<feature type="compositionally biased region" description="Low complexity" evidence="7">
    <location>
        <begin position="1692"/>
        <end position="1702"/>
    </location>
</feature>
<feature type="compositionally biased region" description="Gly residues" evidence="7">
    <location>
        <begin position="1703"/>
        <end position="1718"/>
    </location>
</feature>
<feature type="compositionally biased region" description="Gly residues" evidence="7">
    <location>
        <begin position="1764"/>
        <end position="1774"/>
    </location>
</feature>
<feature type="compositionally biased region" description="Low complexity" evidence="7">
    <location>
        <begin position="1775"/>
        <end position="1785"/>
    </location>
</feature>
<feature type="compositionally biased region" description="Pro residues" evidence="7">
    <location>
        <begin position="1844"/>
        <end position="1855"/>
    </location>
</feature>
<feature type="compositionally biased region" description="Low complexity" evidence="7">
    <location>
        <begin position="1917"/>
        <end position="1940"/>
    </location>
</feature>
<feature type="compositionally biased region" description="Low complexity" evidence="7">
    <location>
        <begin position="1954"/>
        <end position="1980"/>
    </location>
</feature>
<feature type="compositionally biased region" description="Low complexity" evidence="7">
    <location>
        <begin position="1996"/>
        <end position="2006"/>
    </location>
</feature>
<feature type="modified residue" description="Phosphotyrosine" evidence="2">
    <location>
        <position position="186"/>
    </location>
</feature>
<feature type="modified residue" description="Phosphoserine" evidence="2">
    <location>
        <position position="540"/>
    </location>
</feature>
<feature type="modified residue" description="Omega-N-methylarginine" evidence="2">
    <location>
        <position position="544"/>
    </location>
</feature>
<feature type="modified residue" description="Phosphoserine" evidence="2">
    <location>
        <position position="671"/>
    </location>
</feature>
<feature type="modified residue" description="Phosphoserine" evidence="2">
    <location>
        <position position="791"/>
    </location>
</feature>
<feature type="modified residue" description="Phosphoserine" evidence="2">
    <location>
        <position position="890"/>
    </location>
</feature>
<feature type="modified residue" description="Omega-N-methylarginine" evidence="2">
    <location>
        <position position="950"/>
    </location>
</feature>
<feature type="modified residue" description="Omega-N-methylarginine" evidence="2">
    <location>
        <position position="1051"/>
    </location>
</feature>
<feature type="modified residue" description="Omega-N-methylarginine" evidence="2">
    <location>
        <position position="1090"/>
    </location>
</feature>
<feature type="modified residue" description="Omega-N-methylarginine" evidence="2">
    <location>
        <position position="1101"/>
    </location>
</feature>
<feature type="modified residue" description="Asymmetric dimethylarginine" evidence="2">
    <location>
        <position position="1253"/>
    </location>
</feature>
<feature type="modified residue" description="Phosphoserine" evidence="2">
    <location>
        <position position="1287"/>
    </location>
</feature>
<feature type="modified residue" description="Omega-N-methylarginine" evidence="2">
    <location>
        <position position="1423"/>
    </location>
</feature>
<feature type="modified residue" description="Phosphoserine" evidence="3">
    <location>
        <position position="1436"/>
    </location>
</feature>
<feature type="modified residue" description="Omega-N-methylarginine" evidence="2">
    <location>
        <position position="1895"/>
    </location>
</feature>
<feature type="modified residue" description="Omega-N-methylarginine" evidence="2">
    <location>
        <position position="2016"/>
    </location>
</feature>
<feature type="modified residue" description="Omega-N-methylarginine" evidence="2">
    <location>
        <position position="2036"/>
    </location>
</feature>
<feature type="modified residue" description="Omega-N-methylarginine" evidence="2">
    <location>
        <position position="2074"/>
    </location>
</feature>
<feature type="splice variant" id="VSP_006069" description="In isoform 2." evidence="11">
    <location>
        <begin position="1"/>
        <end position="613"/>
    </location>
</feature>
<feature type="splice variant" id="VSP_006070" description="In isoform 2." evidence="11">
    <original>RSQESKQESRSDKAKRLFRHYTVGSYDSFDAPSLMDGIGPG</original>
    <variation>MQLMALEQRFGSGLPGGGQPLCLMMSSPLPPPPPHFSCLPA</variation>
    <location>
        <begin position="614"/>
        <end position="654"/>
    </location>
</feature>
<feature type="splice variant" id="VSP_006071" description="In isoform 3." evidence="11">
    <location>
        <begin position="646"/>
        <end position="654"/>
    </location>
</feature>
<feature type="sequence variant" id="VAR_055318" description="In dbSNP:rs10423744.">
    <original>A</original>
    <variation>V</variation>
    <location>
        <position position="6"/>
    </location>
</feature>
<feature type="sequence variant" id="VAR_036541" description="In a colorectal cancer sample; somatic mutation." evidence="10">
    <original>A</original>
    <variation>D</variation>
    <location>
        <position position="569"/>
    </location>
</feature>
<feature type="sequence variant" id="VAR_022123" description="In dbSNP:rs3745521.">
    <original>V</original>
    <variation>A</variation>
    <location>
        <position position="1504"/>
    </location>
</feature>
<feature type="sequence variant" id="VAR_036542" description="In a colorectal cancer sample; somatic mutation; dbSNP:rs200040610." evidence="10">
    <original>G</original>
    <variation>R</variation>
    <location>
        <position position="2026"/>
    </location>
</feature>
<feature type="sequence conflict" description="In Ref. 1; AAD45121/AAF35887." evidence="12" ref="1">
    <original>S</original>
    <variation>Y</variation>
    <location>
        <position position="927"/>
    </location>
</feature>
<feature type="sequence conflict" description="In Ref. 1; AAD45121/AAF35887." evidence="12" ref="1">
    <original>P</original>
    <variation>T</variation>
    <location>
        <position position="937"/>
    </location>
</feature>
<feature type="sequence conflict" description="In Ref. 1; AAD45121/AAF35887." evidence="12" ref="1">
    <original>S</original>
    <variation>T</variation>
    <location>
        <position position="969"/>
    </location>
</feature>
<feature type="sequence conflict" description="In Ref. 1; AAD45121/AAF35887." evidence="12" ref="1">
    <original>F</original>
    <variation>I</variation>
    <location>
        <position position="1085"/>
    </location>
</feature>
<feature type="sequence conflict" description="In Ref. 1; AAD45121/AAF35887." evidence="12" ref="1">
    <original>T</original>
    <variation>S</variation>
    <location>
        <position position="1133"/>
    </location>
</feature>
<feature type="sequence conflict" description="In Ref. 1; AAD45121/AAF35887." evidence="12" ref="1">
    <original>S</original>
    <variation>C</variation>
    <location>
        <position position="1832"/>
    </location>
</feature>
<feature type="strand" evidence="13">
    <location>
        <begin position="559"/>
        <end position="563"/>
    </location>
</feature>
<feature type="strand" evidence="13">
    <location>
        <begin position="569"/>
        <end position="572"/>
    </location>
</feature>
<feature type="strand" evidence="13">
    <location>
        <begin position="580"/>
        <end position="586"/>
    </location>
</feature>
<feature type="strand" evidence="13">
    <location>
        <begin position="591"/>
        <end position="596"/>
    </location>
</feature>
<feature type="strand" evidence="13">
    <location>
        <begin position="599"/>
        <end position="604"/>
    </location>
</feature>
<feature type="helix" evidence="13">
    <location>
        <begin position="605"/>
        <end position="607"/>
    </location>
</feature>
<feature type="strand" evidence="14">
    <location>
        <begin position="656"/>
        <end position="667"/>
    </location>
</feature>
<feature type="strand" evidence="14">
    <location>
        <begin position="675"/>
        <end position="680"/>
    </location>
</feature>
<feature type="strand" evidence="15">
    <location>
        <begin position="694"/>
        <end position="696"/>
    </location>
</feature>
<feature type="strand" evidence="14">
    <location>
        <begin position="699"/>
        <end position="705"/>
    </location>
</feature>
<feature type="helix" evidence="14">
    <location>
        <begin position="710"/>
        <end position="714"/>
    </location>
</feature>
<feature type="strand" evidence="14">
    <location>
        <begin position="721"/>
        <end position="725"/>
    </location>
</feature>
<feature type="helix" evidence="14">
    <location>
        <begin position="735"/>
        <end position="744"/>
    </location>
</feature>
<feature type="turn" evidence="14">
    <location>
        <begin position="745"/>
        <end position="747"/>
    </location>
</feature>
<feature type="strand" evidence="14">
    <location>
        <begin position="748"/>
        <end position="757"/>
    </location>
</feature>
<sequence>MTHSPATSEDEERHSASECPEGGSESDSSPDGPGRGPRGTRGQGSGAPGSLASVRGLQGRSMSVPDDAHFSMMVFRIGIPDLHQTKCLRFNPDATIWTAKQQVLCALSESLQDVLNYGLFQPATSGRDANFLEEERLLREYPQSFEKGVPYLEFRYKTRVYKQTNLDEKQLAKLHTKTGLKKFLEYVQLGTSDKVARLLDKGLDPNYHDSDSGETPLTLAAQTEGSVEVIRTLCLGGAHIDFRARDGMTALHKAACARHCLALTALLDLGGSPNYKDRRGLTPLFHTAMVGGDPRCCELLLFNRAQLGIADENGWQEIHQACQRGHSQHLEHLLFYGAEPGAQNASGNTALHICALYNKETCARILLYRGADKDVKNNNGQTPFQVAVIAGNFELGELIRNHREQDVVPFQESPKYAARRRGPPGTGLTVPPALLRANSDTSMALPDWMVFSAPGAASSGAPGPTSGSQGQSQPSAPTTKLSSGTLRSASSPRGARARSPSRGRHPEDAKRQPRGRPSSSGTPREGPAGGTGGSGGPGGSLGSRGRRRKLYSAVPGRSFMAVKSYQAQAEGEISLSKGEKIKVLSIGEGGFWEGQVKGRVGWFPSDCLEEVANRSQESKQESRSDKAKRLFRHYTVGSYDSFDAPSLMDGIGPGSDYIIKEKTVLLQKKDSEGFGFVLRGAKAQTPIEEFTPTPAFPALQYLESVDEGGVAWRAGLRMGDFLIEVNGQNVVKVGHRQVVNMIRQGGNTLMVKVVMVTRHPDMDEAVHKKAPQQAKRLPPPTISLRSKSMTSELEEMEYEQQPAPVPSMEKKRTVYQMALNKLDEILAAAQQTISASESPGPGGLASLGKHRPKGFFATESSFDPHHRAQPSYERPSFLPPGPGLMLRQKSIGAAEDDRPYLAPPAMKFSRSLSVPGSEDIPPPPTTSPPEPPYSTPPVPSSSGRLTPSPRGGPFNPGSGGPLPASSPASFDGPSPPDTRVGSREKSLYHSGPLPPAHHHPPHHHHHHAPPPQPHHHHAHPPHPPEMETGGSPDDPPPRLALGPQPSLRGWRGGGPSPTPGAPSPSHHGSAGGGGGSSQGPALRYFQLPPRAASAAMYVPARSGRGRKGPLVKQTKVEGEPQKGGGLPPAPSPTSPASPQPPPAVAAPSEKNSIPIPTIIIKAPSTSSSGRSSQGSSTEAEPPTQPEPTGGGGGGGSSPSPAPAMSPVPPSPSPVPTPASPSGPATLDFTSQFGAALVGAARREGGWQNEARRRSTLFLSTDAGDEDGGDGGLGTGAAPGPRLRHSKSIDEGMFSAEPYLRLESAGSGAGYGGYGAGSRAYGGGGGSSAFTSFLPPRPLVHPLTGKALDPASPLGLALAARERALKESSEGGGAPQPPPRPPSPRYEAPPPTPHHHSPHAHHEPVLRLWGASPPDPARRELGYRAGLGSQEKSLPASPPAARRSLLHRLPPTAPGVGPLLLQLGTEPPAPHPGVSKPWRSAAPEEPERLPLHVRFLENCQPRAPVTSGRGPPSEDGPGVPPPSPRRSVPPSPTSPRASEENGLPLLVLPPPAPSVDVEDGEFLFVEPLPPPLEFSNSFEKPESPLTPGPPHPLPDTPAPATPLPPVPPPAVAAAPPTLDSTASSLTSYDSEVATLTQGASAAPGDPHPPGPPAPAAPAPAAPQPGPDPPPGTDSGIEEVDSRSSSDHPLETISSASTLSSLSAEGGGSAGGGGGAGAGVASGPELLDTYVAYLDGQAFGGSSTPGPPYPPQLMTPSKLRGRALGASGGLRPGPSGGLRDPVTPTSPTVSVTGAGTDGLLALRACSGPPTAGVAGGPVAVEPEVPPVPLPTASSLPRKLLPWEEGPGPPPPPLPGPLAQPQASALATVKASIISELSSKLQQFGGSSAAGGALPWARGGSGGGGDSHHGGASYVPERTSSLQRQRLSDDSQSSLLSKPVSSLFQNWPKPPLPPLPTGTGVSPTAAAAPGATSPSASSSSTSTRHLQGVEFEMRPPLLRRAPSPSLLPASEHKVSPAPRPSSLPILPSGPLYPGLFDIRGSPTGGAGGSADPFAPVFVPPHPGISGGLGGALSGASRSLSPTRLLSLPPDKPFGAKPLGFWTKFDVADWLEWLGLAEHRAQFLDHEIDGSHLPALTKEDYVDLGVTRVGHRMNIDRALKFFLER</sequence>
<keyword id="KW-0002">3D-structure</keyword>
<keyword id="KW-0025">Alternative splicing</keyword>
<keyword id="KW-0040">ANK repeat</keyword>
<keyword id="KW-0963">Cytoplasm</keyword>
<keyword id="KW-0221">Differentiation</keyword>
<keyword id="KW-0488">Methylation</keyword>
<keyword id="KW-0524">Neurogenesis</keyword>
<keyword id="KW-0597">Phosphoprotein</keyword>
<keyword id="KW-1267">Proteomics identification</keyword>
<keyword id="KW-1185">Reference proteome</keyword>
<keyword id="KW-0677">Repeat</keyword>
<keyword id="KW-0728">SH3 domain</keyword>
<keyword id="KW-0770">Synapse</keyword>
<protein>
    <recommendedName>
        <fullName>SH3 and multiple ankyrin repeat domains protein 1</fullName>
        <shortName>Shank1</shortName>
    </recommendedName>
    <alternativeName>
        <fullName>Somatostatin receptor-interacting protein</fullName>
        <shortName>SSTR-interacting protein</shortName>
        <shortName>SSTRIP</shortName>
    </alternativeName>
</protein>
<accession>Q9Y566</accession>
<accession>A8MXP5</accession>
<accession>B7WNY6</accession>
<accession>Q9NYW9</accession>
<name>SHAN1_HUMAN</name>
<organism>
    <name type="scientific">Homo sapiens</name>
    <name type="common">Human</name>
    <dbReference type="NCBI Taxonomy" id="9606"/>
    <lineage>
        <taxon>Eukaryota</taxon>
        <taxon>Metazoa</taxon>
        <taxon>Chordata</taxon>
        <taxon>Craniata</taxon>
        <taxon>Vertebrata</taxon>
        <taxon>Euteleostomi</taxon>
        <taxon>Mammalia</taxon>
        <taxon>Eutheria</taxon>
        <taxon>Euarchontoglires</taxon>
        <taxon>Primates</taxon>
        <taxon>Haplorrhini</taxon>
        <taxon>Catarrhini</taxon>
        <taxon>Hominidae</taxon>
        <taxon>Homo</taxon>
    </lineage>
</organism>
<dbReference type="EMBL" id="AF163302">
    <property type="protein sequence ID" value="AAD45121.1"/>
    <property type="molecule type" value="mRNA"/>
</dbReference>
<dbReference type="EMBL" id="AF226728">
    <property type="protein sequence ID" value="AAF35887.1"/>
    <property type="molecule type" value="mRNA"/>
</dbReference>
<dbReference type="EMBL" id="AC008743">
    <property type="status" value="NOT_ANNOTATED_CDS"/>
    <property type="molecule type" value="Genomic_DNA"/>
</dbReference>
<dbReference type="EMBL" id="AC010325">
    <property type="status" value="NOT_ANNOTATED_CDS"/>
    <property type="molecule type" value="Genomic_DNA"/>
</dbReference>
<dbReference type="CCDS" id="CCDS12799.1">
    <molecule id="Q9Y566-1"/>
</dbReference>
<dbReference type="RefSeq" id="NP_057232.2">
    <molecule id="Q9Y566-1"/>
    <property type="nucleotide sequence ID" value="NM_016148.5"/>
</dbReference>
<dbReference type="RefSeq" id="XP_006723296.1">
    <property type="nucleotide sequence ID" value="XM_006723233.3"/>
</dbReference>
<dbReference type="RefSeq" id="XP_011525316.1">
    <molecule id="Q9Y566-3"/>
    <property type="nucleotide sequence ID" value="XM_011527014.3"/>
</dbReference>
<dbReference type="RefSeq" id="XP_054177113.1">
    <molecule id="Q9Y566-3"/>
    <property type="nucleotide sequence ID" value="XM_054321138.1"/>
</dbReference>
<dbReference type="PDB" id="6CPI">
    <property type="method" value="NMR"/>
    <property type="chains" value="A=554-613"/>
</dbReference>
<dbReference type="PDB" id="6YWZ">
    <property type="method" value="X-ray"/>
    <property type="resolution" value="2.12 A"/>
    <property type="chains" value="A/B=654-762"/>
</dbReference>
<dbReference type="PDB" id="6YX0">
    <property type="method" value="X-ray"/>
    <property type="resolution" value="1.57 A"/>
    <property type="chains" value="A/B=654-762"/>
</dbReference>
<dbReference type="PDB" id="6YX1">
    <property type="method" value="X-ray"/>
    <property type="resolution" value="1.80 A"/>
    <property type="chains" value="A/B=654-762"/>
</dbReference>
<dbReference type="PDB" id="6YX2">
    <property type="method" value="X-ray"/>
    <property type="resolution" value="1.62 A"/>
    <property type="chains" value="A/B=654-762"/>
</dbReference>
<dbReference type="PDB" id="7A00">
    <property type="method" value="X-ray"/>
    <property type="resolution" value="1.78 A"/>
    <property type="chains" value="A/B=654-762"/>
</dbReference>
<dbReference type="PDB" id="8S1R">
    <property type="method" value="X-ray"/>
    <property type="resolution" value="1.98 A"/>
    <property type="chains" value="AAA/BBB/CCC/DDD=654-762"/>
</dbReference>
<dbReference type="PDBsum" id="6CPI"/>
<dbReference type="PDBsum" id="6YWZ"/>
<dbReference type="PDBsum" id="6YX0"/>
<dbReference type="PDBsum" id="6YX1"/>
<dbReference type="PDBsum" id="6YX2"/>
<dbReference type="PDBsum" id="7A00"/>
<dbReference type="PDBsum" id="8S1R"/>
<dbReference type="SMR" id="Q9Y566"/>
<dbReference type="BioGRID" id="119171">
    <property type="interactions" value="28"/>
</dbReference>
<dbReference type="DIP" id="DIP-40834N"/>
<dbReference type="ELM" id="Q9Y566"/>
<dbReference type="FunCoup" id="Q9Y566">
    <property type="interactions" value="245"/>
</dbReference>
<dbReference type="IntAct" id="Q9Y566">
    <property type="interactions" value="41"/>
</dbReference>
<dbReference type="MINT" id="Q9Y566"/>
<dbReference type="STRING" id="9606.ENSP00000293441"/>
<dbReference type="GlyCosmos" id="Q9Y566">
    <property type="glycosylation" value="4 sites, 1 glycan"/>
</dbReference>
<dbReference type="GlyGen" id="Q9Y566">
    <property type="glycosylation" value="16 sites, 1 O-linked glycan (4 sites)"/>
</dbReference>
<dbReference type="iPTMnet" id="Q9Y566"/>
<dbReference type="PhosphoSitePlus" id="Q9Y566"/>
<dbReference type="BioMuta" id="SHANK1"/>
<dbReference type="DMDM" id="229462779"/>
<dbReference type="jPOST" id="Q9Y566"/>
<dbReference type="MassIVE" id="Q9Y566"/>
<dbReference type="PaxDb" id="9606-ENSP00000293441"/>
<dbReference type="PeptideAtlas" id="Q9Y566"/>
<dbReference type="ProteomicsDB" id="86293">
    <molecule id="Q9Y566-1"/>
</dbReference>
<dbReference type="ProteomicsDB" id="86294">
    <molecule id="Q9Y566-2"/>
</dbReference>
<dbReference type="ProteomicsDB" id="86295">
    <molecule id="Q9Y566-3"/>
</dbReference>
<dbReference type="ABCD" id="Q9Y566">
    <property type="antibodies" value="2 sequenced antibodies"/>
</dbReference>
<dbReference type="Antibodypedia" id="18886">
    <property type="antibodies" value="199 antibodies from 27 providers"/>
</dbReference>
<dbReference type="DNASU" id="50944"/>
<dbReference type="Ensembl" id="ENST00000293441.6">
    <molecule id="Q9Y566-1"/>
    <property type="protein sequence ID" value="ENSP00000293441.1"/>
    <property type="gene ID" value="ENSG00000161681.17"/>
</dbReference>
<dbReference type="Ensembl" id="ENST00000359082.3">
    <molecule id="Q9Y566-3"/>
    <property type="protein sequence ID" value="ENSP00000351984.2"/>
    <property type="gene ID" value="ENSG00000161681.17"/>
</dbReference>
<dbReference type="GeneID" id="50944"/>
<dbReference type="KEGG" id="hsa:50944"/>
<dbReference type="MANE-Select" id="ENST00000293441.6">
    <property type="protein sequence ID" value="ENSP00000293441.1"/>
    <property type="RefSeq nucleotide sequence ID" value="NM_016148.5"/>
    <property type="RefSeq protein sequence ID" value="NP_057232.2"/>
</dbReference>
<dbReference type="UCSC" id="uc002psw.2">
    <molecule id="Q9Y566-1"/>
    <property type="organism name" value="human"/>
</dbReference>
<dbReference type="AGR" id="HGNC:15474"/>
<dbReference type="CTD" id="50944"/>
<dbReference type="DisGeNET" id="50944"/>
<dbReference type="GeneCards" id="SHANK1"/>
<dbReference type="HGNC" id="HGNC:15474">
    <property type="gene designation" value="SHANK1"/>
</dbReference>
<dbReference type="HPA" id="ENSG00000161681">
    <property type="expression patterns" value="Tissue enriched (brain)"/>
</dbReference>
<dbReference type="MalaCards" id="SHANK1"/>
<dbReference type="MIM" id="604999">
    <property type="type" value="gene"/>
</dbReference>
<dbReference type="neXtProt" id="NX_Q9Y566"/>
<dbReference type="OpenTargets" id="ENSG00000161681"/>
<dbReference type="PharmGKB" id="PA37965"/>
<dbReference type="VEuPathDB" id="HostDB:ENSG00000161681"/>
<dbReference type="eggNOG" id="KOG0504">
    <property type="taxonomic scope" value="Eukaryota"/>
</dbReference>
<dbReference type="eggNOG" id="KOG4375">
    <property type="taxonomic scope" value="Eukaryota"/>
</dbReference>
<dbReference type="GeneTree" id="ENSGT00940000153561"/>
<dbReference type="HOGENOM" id="CLU_001824_1_0_1"/>
<dbReference type="InParanoid" id="Q9Y566"/>
<dbReference type="OMA" id="VRFMENC"/>
<dbReference type="OrthoDB" id="445896at2759"/>
<dbReference type="PAN-GO" id="Q9Y566">
    <property type="GO annotations" value="5 GO annotations based on evolutionary models"/>
</dbReference>
<dbReference type="PhylomeDB" id="Q9Y566"/>
<dbReference type="TreeFam" id="TF324593"/>
<dbReference type="PathwayCommons" id="Q9Y566"/>
<dbReference type="Reactome" id="R-HSA-6794361">
    <property type="pathway name" value="Neurexins and neuroligins"/>
</dbReference>
<dbReference type="SignaLink" id="Q9Y566"/>
<dbReference type="SIGNOR" id="Q9Y566"/>
<dbReference type="BioGRID-ORCS" id="50944">
    <property type="hits" value="6 hits in 1150 CRISPR screens"/>
</dbReference>
<dbReference type="CD-CODE" id="FB4E32DD">
    <property type="entry name" value="Presynaptic clusters and postsynaptic densities"/>
</dbReference>
<dbReference type="ChiTaRS" id="SHANK1">
    <property type="organism name" value="human"/>
</dbReference>
<dbReference type="GeneWiki" id="SHANK1"/>
<dbReference type="GenomeRNAi" id="50944"/>
<dbReference type="Pharos" id="Q9Y566">
    <property type="development level" value="Tbio"/>
</dbReference>
<dbReference type="PRO" id="PR:Q9Y566"/>
<dbReference type="Proteomes" id="UP000005640">
    <property type="component" value="Chromosome 19"/>
</dbReference>
<dbReference type="RNAct" id="Q9Y566">
    <property type="molecule type" value="protein"/>
</dbReference>
<dbReference type="Bgee" id="ENSG00000161681">
    <property type="expression patterns" value="Expressed in anterior cingulate cortex and 130 other cell types or tissues"/>
</dbReference>
<dbReference type="ExpressionAtlas" id="Q9Y566">
    <property type="expression patterns" value="baseline and differential"/>
</dbReference>
<dbReference type="GO" id="GO:0005829">
    <property type="term" value="C:cytosol"/>
    <property type="evidence" value="ECO:0000304"/>
    <property type="project" value="Reactome"/>
</dbReference>
<dbReference type="GO" id="GO:0030425">
    <property type="term" value="C:dendrite"/>
    <property type="evidence" value="ECO:0000303"/>
    <property type="project" value="UniProtKB"/>
</dbReference>
<dbReference type="GO" id="GO:0043197">
    <property type="term" value="C:dendritic spine"/>
    <property type="evidence" value="ECO:0000250"/>
    <property type="project" value="BHF-UCL"/>
</dbReference>
<dbReference type="GO" id="GO:0060076">
    <property type="term" value="C:excitatory synapse"/>
    <property type="evidence" value="ECO:0000250"/>
    <property type="project" value="BHF-UCL"/>
</dbReference>
<dbReference type="GO" id="GO:0098978">
    <property type="term" value="C:glutamatergic synapse"/>
    <property type="evidence" value="ECO:0007669"/>
    <property type="project" value="Ensembl"/>
</dbReference>
<dbReference type="GO" id="GO:0016020">
    <property type="term" value="C:membrane"/>
    <property type="evidence" value="ECO:0000314"/>
    <property type="project" value="UniProtKB"/>
</dbReference>
<dbReference type="GO" id="GO:0043005">
    <property type="term" value="C:neuron projection"/>
    <property type="evidence" value="ECO:0000250"/>
    <property type="project" value="BHF-UCL"/>
</dbReference>
<dbReference type="GO" id="GO:0005886">
    <property type="term" value="C:plasma membrane"/>
    <property type="evidence" value="ECO:0000314"/>
    <property type="project" value="HPA"/>
</dbReference>
<dbReference type="GO" id="GO:0014069">
    <property type="term" value="C:postsynaptic density"/>
    <property type="evidence" value="ECO:0000250"/>
    <property type="project" value="BHF-UCL"/>
</dbReference>
<dbReference type="GO" id="GO:0045211">
    <property type="term" value="C:postsynaptic membrane"/>
    <property type="evidence" value="ECO:0000250"/>
    <property type="project" value="BHF-UCL"/>
</dbReference>
<dbReference type="GO" id="GO:0098685">
    <property type="term" value="C:Schaffer collateral - CA1 synapse"/>
    <property type="evidence" value="ECO:0007669"/>
    <property type="project" value="Ensembl"/>
</dbReference>
<dbReference type="GO" id="GO:0071532">
    <property type="term" value="F:ankyrin repeat binding"/>
    <property type="evidence" value="ECO:0000250"/>
    <property type="project" value="BHF-UCL"/>
</dbReference>
<dbReference type="GO" id="GO:0042802">
    <property type="term" value="F:identical protein binding"/>
    <property type="evidence" value="ECO:0000250"/>
    <property type="project" value="BHF-UCL"/>
</dbReference>
<dbReference type="GO" id="GO:0035255">
    <property type="term" value="F:ionotropic glutamate receptor binding"/>
    <property type="evidence" value="ECO:0000250"/>
    <property type="project" value="BHF-UCL"/>
</dbReference>
<dbReference type="GO" id="GO:0044877">
    <property type="term" value="F:protein-containing complex binding"/>
    <property type="evidence" value="ECO:0000250"/>
    <property type="project" value="BHF-UCL"/>
</dbReference>
<dbReference type="GO" id="GO:0097110">
    <property type="term" value="F:scaffold protein binding"/>
    <property type="evidence" value="ECO:0000250"/>
    <property type="project" value="BHF-UCL"/>
</dbReference>
<dbReference type="GO" id="GO:0017124">
    <property type="term" value="F:SH3 domain binding"/>
    <property type="evidence" value="ECO:0000250"/>
    <property type="project" value="BHF-UCL"/>
</dbReference>
<dbReference type="GO" id="GO:0031877">
    <property type="term" value="F:somatostatin receptor binding"/>
    <property type="evidence" value="ECO:0000250"/>
    <property type="project" value="BHF-UCL"/>
</dbReference>
<dbReference type="GO" id="GO:0098919">
    <property type="term" value="F:structural constituent of postsynaptic density"/>
    <property type="evidence" value="ECO:0007669"/>
    <property type="project" value="Ensembl"/>
</dbReference>
<dbReference type="GO" id="GO:0030160">
    <property type="term" value="F:synaptic receptor adaptor activity"/>
    <property type="evidence" value="ECO:0000250"/>
    <property type="project" value="BHF-UCL"/>
</dbReference>
<dbReference type="GO" id="GO:0030534">
    <property type="term" value="P:adult behavior"/>
    <property type="evidence" value="ECO:0000315"/>
    <property type="project" value="BHF-UCL"/>
</dbReference>
<dbReference type="GO" id="GO:0098990">
    <property type="term" value="P:AMPA selective glutamate receptor signaling pathway"/>
    <property type="evidence" value="ECO:0000250"/>
    <property type="project" value="BHF-UCL"/>
</dbReference>
<dbReference type="GO" id="GO:0008306">
    <property type="term" value="P:associative learning"/>
    <property type="evidence" value="ECO:0000250"/>
    <property type="project" value="BHF-UCL"/>
</dbReference>
<dbReference type="GO" id="GO:0060997">
    <property type="term" value="P:dendritic spine morphogenesis"/>
    <property type="evidence" value="ECO:0000250"/>
    <property type="project" value="BHF-UCL"/>
</dbReference>
<dbReference type="GO" id="GO:0050894">
    <property type="term" value="P:determination of affect"/>
    <property type="evidence" value="ECO:0000315"/>
    <property type="project" value="BHF-UCL"/>
</dbReference>
<dbReference type="GO" id="GO:0046959">
    <property type="term" value="P:habituation"/>
    <property type="evidence" value="ECO:0007669"/>
    <property type="project" value="Ensembl"/>
</dbReference>
<dbReference type="GO" id="GO:0007616">
    <property type="term" value="P:long-term memory"/>
    <property type="evidence" value="ECO:0000250"/>
    <property type="project" value="BHF-UCL"/>
</dbReference>
<dbReference type="GO" id="GO:0032232">
    <property type="term" value="P:negative regulation of actin filament bundle assembly"/>
    <property type="evidence" value="ECO:0000250"/>
    <property type="project" value="BHF-UCL"/>
</dbReference>
<dbReference type="GO" id="GO:0050885">
    <property type="term" value="P:neuromuscular process controlling balance"/>
    <property type="evidence" value="ECO:0000250"/>
    <property type="project" value="BHF-UCL"/>
</dbReference>
<dbReference type="GO" id="GO:0042048">
    <property type="term" value="P:olfactory behavior"/>
    <property type="evidence" value="ECO:0007669"/>
    <property type="project" value="Ensembl"/>
</dbReference>
<dbReference type="GO" id="GO:0060999">
    <property type="term" value="P:positive regulation of dendritic spine development"/>
    <property type="evidence" value="ECO:0000250"/>
    <property type="project" value="BHF-UCL"/>
</dbReference>
<dbReference type="GO" id="GO:2000463">
    <property type="term" value="P:positive regulation of excitatory postsynaptic potential"/>
    <property type="evidence" value="ECO:0000250"/>
    <property type="project" value="BHF-UCL"/>
</dbReference>
<dbReference type="GO" id="GO:0035418">
    <property type="term" value="P:protein localization to synapse"/>
    <property type="evidence" value="ECO:0000250"/>
    <property type="project" value="BHF-UCL"/>
</dbReference>
<dbReference type="GO" id="GO:0065003">
    <property type="term" value="P:protein-containing complex assembly"/>
    <property type="evidence" value="ECO:0000250"/>
    <property type="project" value="BHF-UCL"/>
</dbReference>
<dbReference type="GO" id="GO:0060013">
    <property type="term" value="P:righting reflex"/>
    <property type="evidence" value="ECO:0007669"/>
    <property type="project" value="Ensembl"/>
</dbReference>
<dbReference type="GO" id="GO:0035176">
    <property type="term" value="P:social behavior"/>
    <property type="evidence" value="ECO:0000315"/>
    <property type="project" value="BHF-UCL"/>
</dbReference>
<dbReference type="GO" id="GO:0060074">
    <property type="term" value="P:synapse maturation"/>
    <property type="evidence" value="ECO:0000250"/>
    <property type="project" value="BHF-UCL"/>
</dbReference>
<dbReference type="GO" id="GO:0071625">
    <property type="term" value="P:vocalization behavior"/>
    <property type="evidence" value="ECO:0000315"/>
    <property type="project" value="BHF-UCL"/>
</dbReference>
<dbReference type="CDD" id="cd17175">
    <property type="entry name" value="FERM_F0_SHANK1"/>
    <property type="match status" value="1"/>
</dbReference>
<dbReference type="CDD" id="cd06746">
    <property type="entry name" value="PDZ_SHANK1_3-like"/>
    <property type="match status" value="1"/>
</dbReference>
<dbReference type="CDD" id="cd09506">
    <property type="entry name" value="SAM_Shank1_2_3"/>
    <property type="match status" value="1"/>
</dbReference>
<dbReference type="FunFam" id="1.25.40.20:FF:000063">
    <property type="entry name" value="SH3 and multiple ankyrin repeat domains protein 1"/>
    <property type="match status" value="1"/>
</dbReference>
<dbReference type="FunFam" id="3.10.20.90:FF:000029">
    <property type="entry name" value="SH3 and multiple ankyrin repeat domains protein 1"/>
    <property type="match status" value="1"/>
</dbReference>
<dbReference type="FunFam" id="1.10.150.50:FF:000006">
    <property type="entry name" value="SH3 and multiple ankyrin repeat domains protein 2"/>
    <property type="match status" value="1"/>
</dbReference>
<dbReference type="FunFam" id="2.30.30.40:FF:000025">
    <property type="entry name" value="SH3 and multiple ankyrin repeat domains protein 2"/>
    <property type="match status" value="1"/>
</dbReference>
<dbReference type="FunFam" id="2.30.42.10:FF:000018">
    <property type="entry name" value="SH3 and multiple ankyrin repeat domains protein 2"/>
    <property type="match status" value="1"/>
</dbReference>
<dbReference type="Gene3D" id="2.30.42.10">
    <property type="match status" value="1"/>
</dbReference>
<dbReference type="Gene3D" id="1.25.40.20">
    <property type="entry name" value="Ankyrin repeat-containing domain"/>
    <property type="match status" value="1"/>
</dbReference>
<dbReference type="Gene3D" id="3.10.20.90">
    <property type="entry name" value="Phosphatidylinositol 3-kinase Catalytic Subunit, Chain A, domain 1"/>
    <property type="match status" value="1"/>
</dbReference>
<dbReference type="Gene3D" id="2.30.30.40">
    <property type="entry name" value="SH3 Domains"/>
    <property type="match status" value="1"/>
</dbReference>
<dbReference type="Gene3D" id="1.10.150.50">
    <property type="entry name" value="Transcription Factor, Ets-1"/>
    <property type="match status" value="1"/>
</dbReference>
<dbReference type="InterPro" id="IPR002110">
    <property type="entry name" value="Ankyrin_rpt"/>
</dbReference>
<dbReference type="InterPro" id="IPR036770">
    <property type="entry name" value="Ankyrin_rpt-contain_sf"/>
</dbReference>
<dbReference type="InterPro" id="IPR001478">
    <property type="entry name" value="PDZ"/>
</dbReference>
<dbReference type="InterPro" id="IPR041489">
    <property type="entry name" value="PDZ_6"/>
</dbReference>
<dbReference type="InterPro" id="IPR036034">
    <property type="entry name" value="PDZ_sf"/>
</dbReference>
<dbReference type="InterPro" id="IPR001660">
    <property type="entry name" value="SAM"/>
</dbReference>
<dbReference type="InterPro" id="IPR013761">
    <property type="entry name" value="SAM/pointed_sf"/>
</dbReference>
<dbReference type="InterPro" id="IPR036028">
    <property type="entry name" value="SH3-like_dom_sf"/>
</dbReference>
<dbReference type="InterPro" id="IPR001452">
    <property type="entry name" value="SH3_domain"/>
</dbReference>
<dbReference type="InterPro" id="IPR051569">
    <property type="entry name" value="SHANK"/>
</dbReference>
<dbReference type="PANTHER" id="PTHR24135">
    <property type="entry name" value="SH3 AND MULTIPLE ANKYRIN REPEAT DOMAINS PROTEIN"/>
    <property type="match status" value="1"/>
</dbReference>
<dbReference type="PANTHER" id="PTHR24135:SF3">
    <property type="entry name" value="SH3 AND MULTIPLE ANKYRIN REPEAT DOMAINS PROTEIN 1"/>
    <property type="match status" value="1"/>
</dbReference>
<dbReference type="Pfam" id="PF12796">
    <property type="entry name" value="Ank_2"/>
    <property type="match status" value="2"/>
</dbReference>
<dbReference type="Pfam" id="PF17820">
    <property type="entry name" value="PDZ_6"/>
    <property type="match status" value="1"/>
</dbReference>
<dbReference type="Pfam" id="PF00536">
    <property type="entry name" value="SAM_1"/>
    <property type="match status" value="1"/>
</dbReference>
<dbReference type="Pfam" id="PF07653">
    <property type="entry name" value="SH3_2"/>
    <property type="match status" value="1"/>
</dbReference>
<dbReference type="SMART" id="SM00248">
    <property type="entry name" value="ANK"/>
    <property type="match status" value="6"/>
</dbReference>
<dbReference type="SMART" id="SM00228">
    <property type="entry name" value="PDZ"/>
    <property type="match status" value="1"/>
</dbReference>
<dbReference type="SMART" id="SM00454">
    <property type="entry name" value="SAM"/>
    <property type="match status" value="1"/>
</dbReference>
<dbReference type="SMART" id="SM00326">
    <property type="entry name" value="SH3"/>
    <property type="match status" value="1"/>
</dbReference>
<dbReference type="SUPFAM" id="SSF48403">
    <property type="entry name" value="Ankyrin repeat"/>
    <property type="match status" value="1"/>
</dbReference>
<dbReference type="SUPFAM" id="SSF50156">
    <property type="entry name" value="PDZ domain-like"/>
    <property type="match status" value="1"/>
</dbReference>
<dbReference type="SUPFAM" id="SSF47769">
    <property type="entry name" value="SAM/Pointed domain"/>
    <property type="match status" value="1"/>
</dbReference>
<dbReference type="SUPFAM" id="SSF50044">
    <property type="entry name" value="SH3-domain"/>
    <property type="match status" value="1"/>
</dbReference>
<dbReference type="PROSITE" id="PS50297">
    <property type="entry name" value="ANK_REP_REGION"/>
    <property type="match status" value="1"/>
</dbReference>
<dbReference type="PROSITE" id="PS50088">
    <property type="entry name" value="ANK_REPEAT"/>
    <property type="match status" value="3"/>
</dbReference>
<dbReference type="PROSITE" id="PS50106">
    <property type="entry name" value="PDZ"/>
    <property type="match status" value="1"/>
</dbReference>
<dbReference type="PROSITE" id="PS50105">
    <property type="entry name" value="SAM_DOMAIN"/>
    <property type="match status" value="1"/>
</dbReference>
<dbReference type="PROSITE" id="PS50002">
    <property type="entry name" value="SH3"/>
    <property type="match status" value="1"/>
</dbReference>
<gene>
    <name type="primary">SHANK1</name>
</gene>
<reference key="1">
    <citation type="journal article" date="1999" name="J. Biol. Chem.">
        <title>Somatostatin receptor interacting protein defines a novel family of multidomain proteins present in human and rodent brain.</title>
        <authorList>
            <person name="Zitzer H."/>
            <person name="Hoenck H.-H."/>
            <person name="Baechner D."/>
            <person name="Richter D."/>
            <person name="Kreienkamp H.-J."/>
        </authorList>
    </citation>
    <scope>NUCLEOTIDE SEQUENCE [MRNA] (ISOFORMS 1; 2 AND 3)</scope>
    <scope>INTERACTION WITH SSTR2</scope>
    <source>
        <tissue>Fetal brain</tissue>
        <tissue>Hippocampus</tissue>
        <tissue>Thalamus</tissue>
    </source>
</reference>
<reference key="2">
    <citation type="journal article" date="2004" name="Nature">
        <title>The DNA sequence and biology of human chromosome 19.</title>
        <authorList>
            <person name="Grimwood J."/>
            <person name="Gordon L.A."/>
            <person name="Olsen A.S."/>
            <person name="Terry A."/>
            <person name="Schmutz J."/>
            <person name="Lamerdin J.E."/>
            <person name="Hellsten U."/>
            <person name="Goodstein D."/>
            <person name="Couronne O."/>
            <person name="Tran-Gyamfi M."/>
            <person name="Aerts A."/>
            <person name="Altherr M."/>
            <person name="Ashworth L."/>
            <person name="Bajorek E."/>
            <person name="Black S."/>
            <person name="Branscomb E."/>
            <person name="Caenepeel S."/>
            <person name="Carrano A.V."/>
            <person name="Caoile C."/>
            <person name="Chan Y.M."/>
            <person name="Christensen M."/>
            <person name="Cleland C.A."/>
            <person name="Copeland A."/>
            <person name="Dalin E."/>
            <person name="Dehal P."/>
            <person name="Denys M."/>
            <person name="Detter J.C."/>
            <person name="Escobar J."/>
            <person name="Flowers D."/>
            <person name="Fotopulos D."/>
            <person name="Garcia C."/>
            <person name="Georgescu A.M."/>
            <person name="Glavina T."/>
            <person name="Gomez M."/>
            <person name="Gonzales E."/>
            <person name="Groza M."/>
            <person name="Hammon N."/>
            <person name="Hawkins T."/>
            <person name="Haydu L."/>
            <person name="Ho I."/>
            <person name="Huang W."/>
            <person name="Israni S."/>
            <person name="Jett J."/>
            <person name="Kadner K."/>
            <person name="Kimball H."/>
            <person name="Kobayashi A."/>
            <person name="Larionov V."/>
            <person name="Leem S.-H."/>
            <person name="Lopez F."/>
            <person name="Lou Y."/>
            <person name="Lowry S."/>
            <person name="Malfatti S."/>
            <person name="Martinez D."/>
            <person name="McCready P.M."/>
            <person name="Medina C."/>
            <person name="Morgan J."/>
            <person name="Nelson K."/>
            <person name="Nolan M."/>
            <person name="Ovcharenko I."/>
            <person name="Pitluck S."/>
            <person name="Pollard M."/>
            <person name="Popkie A.P."/>
            <person name="Predki P."/>
            <person name="Quan G."/>
            <person name="Ramirez L."/>
            <person name="Rash S."/>
            <person name="Retterer J."/>
            <person name="Rodriguez A."/>
            <person name="Rogers S."/>
            <person name="Salamov A."/>
            <person name="Salazar A."/>
            <person name="She X."/>
            <person name="Smith D."/>
            <person name="Slezak T."/>
            <person name="Solovyev V."/>
            <person name="Thayer N."/>
            <person name="Tice H."/>
            <person name="Tsai M."/>
            <person name="Ustaszewska A."/>
            <person name="Vo N."/>
            <person name="Wagner M."/>
            <person name="Wheeler J."/>
            <person name="Wu K."/>
            <person name="Xie G."/>
            <person name="Yang J."/>
            <person name="Dubchak I."/>
            <person name="Furey T.S."/>
            <person name="DeJong P."/>
            <person name="Dickson M."/>
            <person name="Gordon D."/>
            <person name="Eichler E.E."/>
            <person name="Pennacchio L.A."/>
            <person name="Richardson P."/>
            <person name="Stubbs L."/>
            <person name="Rokhsar D.S."/>
            <person name="Myers R.M."/>
            <person name="Rubin E.M."/>
            <person name="Lucas S.M."/>
        </authorList>
    </citation>
    <scope>NUCLEOTIDE SEQUENCE [LARGE SCALE GENOMIC DNA]</scope>
</reference>
<reference key="3">
    <citation type="journal article" date="2000" name="J. Cell Sci.">
        <title>The Shank family of scaffold proteins.</title>
        <authorList>
            <person name="Sheng M."/>
            <person name="Kim E."/>
        </authorList>
    </citation>
    <scope>REVIEW</scope>
</reference>
<reference key="4">
    <citation type="journal article" date="2002" name="Mol. Cell. Neurosci.">
        <title>The insulin receptor substrate IRSp53 links postsynaptic shank1 to the small G-protein cdc42.</title>
        <authorList>
            <person name="Soltau M."/>
            <person name="Richter D."/>
            <person name="Kreienkamp H.-J."/>
        </authorList>
    </citation>
    <scope>INTERACTION WITH BAIAP2</scope>
</reference>
<reference key="5">
    <citation type="journal article" date="2006" name="Science">
        <title>The consensus coding sequences of human breast and colorectal cancers.</title>
        <authorList>
            <person name="Sjoeblom T."/>
            <person name="Jones S."/>
            <person name="Wood L.D."/>
            <person name="Parsons D.W."/>
            <person name="Lin J."/>
            <person name="Barber T.D."/>
            <person name="Mandelker D."/>
            <person name="Leary R.J."/>
            <person name="Ptak J."/>
            <person name="Silliman N."/>
            <person name="Szabo S."/>
            <person name="Buckhaults P."/>
            <person name="Farrell C."/>
            <person name="Meeh P."/>
            <person name="Markowitz S.D."/>
            <person name="Willis J."/>
            <person name="Dawson D."/>
            <person name="Willson J.K.V."/>
            <person name="Gazdar A.F."/>
            <person name="Hartigan J."/>
            <person name="Wu L."/>
            <person name="Liu C."/>
            <person name="Parmigiani G."/>
            <person name="Park B.H."/>
            <person name="Bachman K.E."/>
            <person name="Papadopoulos N."/>
            <person name="Vogelstein B."/>
            <person name="Kinzler K.W."/>
            <person name="Velculescu V.E."/>
        </authorList>
    </citation>
    <scope>VARIANTS [LARGE SCALE ANALYSIS] ASP-569 AND ARG-2026</scope>
</reference>
<proteinExistence type="evidence at protein level"/>
<comment type="function">
    <text>Seems to be an adapter protein in the postsynaptic density (PSD) of excitatory synapses that interconnects receptors of the postsynaptic membrane including NMDA-type and metabotropic glutamate receptors via complexes with GKAP/PSD-95 and Homer, respectively, and the actin-based cytoskeleton. Plays a role in the structural and functional organization of the dendritic spine and synaptic junction.</text>
</comment>
<comment type="subunit">
    <text evidence="1 3 8 9">May homomultimerize via its SAM domain (By similarity). Interacts with the C-terminus of SSTR2 via the PDZ domain. Interacts with IGSF9, SHARPIN, SPTAN1, HOMER1 and DLGAP1/GKAP isoforms 1 and 2 (By similarity). Part of a complex with DLG4/PSD-95 and DLGAP1/GKAP (By similarity). Interacts with BAIAP2. Interacts with HOMER1 and HOMER3 (By similarity).</text>
</comment>
<comment type="interaction">
    <interactant intactId="EBI-3442234">
        <id>Q9Y566</id>
    </interactant>
    <interactant intactId="EBI-7730807">
        <id>Q9BYF1</id>
        <label>ACE2</label>
    </interactant>
    <organismsDiffer>false</organismsDiffer>
    <experiments>2</experiments>
</comment>
<comment type="interaction">
    <interactant intactId="EBI-3442234">
        <id>Q9Y566</id>
    </interactant>
    <interactant intactId="EBI-1384149">
        <id>Q15349</id>
        <label>RPS6KA2</label>
    </interactant>
    <organismsDiffer>false</organismsDiffer>
    <experiments>2</experiments>
</comment>
<comment type="subcellular location">
    <subcellularLocation>
        <location evidence="1">Cytoplasm</location>
    </subcellularLocation>
    <subcellularLocation>
        <location evidence="1">Postsynaptic density</location>
    </subcellularLocation>
    <subcellularLocation>
        <location evidence="1">Synapse</location>
    </subcellularLocation>
    <text evidence="1">Colocalizes with alpha-latrotoxin receptor 1.</text>
</comment>
<comment type="alternative products">
    <event type="alternative splicing"/>
    <isoform>
        <id>Q9Y566-1</id>
        <name>1</name>
        <name>A</name>
        <sequence type="displayed"/>
    </isoform>
    <isoform>
        <id>Q9Y566-2</id>
        <name>2</name>
        <name>B</name>
        <sequence type="described" ref="VSP_006069 VSP_006070"/>
    </isoform>
    <isoform>
        <id>Q9Y566-3</id>
        <name>3</name>
        <sequence type="described" ref="VSP_006071"/>
    </isoform>
</comment>
<comment type="tissue specificity">
    <text>Expressed in brain particularly in the amygdala, hippocampus, substantia nigra and thalamus. Isoform 2 seems to be expressed ubiquitously.</text>
</comment>
<comment type="similarity">
    <text evidence="12">Belongs to the SHANK family.</text>
</comment>
<evidence type="ECO:0000250" key="1"/>
<evidence type="ECO:0000250" key="2">
    <source>
        <dbReference type="UniProtKB" id="D3YZU1"/>
    </source>
</evidence>
<evidence type="ECO:0000250" key="3">
    <source>
        <dbReference type="UniProtKB" id="Q9WV48"/>
    </source>
</evidence>
<evidence type="ECO:0000255" key="4">
    <source>
        <dbReference type="PROSITE-ProRule" id="PRU00143"/>
    </source>
</evidence>
<evidence type="ECO:0000255" key="5">
    <source>
        <dbReference type="PROSITE-ProRule" id="PRU00184"/>
    </source>
</evidence>
<evidence type="ECO:0000255" key="6">
    <source>
        <dbReference type="PROSITE-ProRule" id="PRU00192"/>
    </source>
</evidence>
<evidence type="ECO:0000256" key="7">
    <source>
        <dbReference type="SAM" id="MobiDB-lite"/>
    </source>
</evidence>
<evidence type="ECO:0000269" key="8">
    <source>
    </source>
</evidence>
<evidence type="ECO:0000269" key="9">
    <source>
    </source>
</evidence>
<evidence type="ECO:0000269" key="10">
    <source>
    </source>
</evidence>
<evidence type="ECO:0000303" key="11">
    <source>
    </source>
</evidence>
<evidence type="ECO:0000305" key="12"/>
<evidence type="ECO:0007829" key="13">
    <source>
        <dbReference type="PDB" id="6CPI"/>
    </source>
</evidence>
<evidence type="ECO:0007829" key="14">
    <source>
        <dbReference type="PDB" id="6YX0"/>
    </source>
</evidence>
<evidence type="ECO:0007829" key="15">
    <source>
        <dbReference type="PDB" id="6YX2"/>
    </source>
</evidence>